<comment type="function">
    <text evidence="1">Catalyzes the reversible conversion of ribose-5-phosphate to ribulose 5-phosphate.</text>
</comment>
<comment type="catalytic activity">
    <reaction evidence="1">
        <text>aldehydo-D-ribose 5-phosphate = D-ribulose 5-phosphate</text>
        <dbReference type="Rhea" id="RHEA:14657"/>
        <dbReference type="ChEBI" id="CHEBI:58121"/>
        <dbReference type="ChEBI" id="CHEBI:58273"/>
        <dbReference type="EC" id="5.3.1.6"/>
    </reaction>
</comment>
<comment type="pathway">
    <text evidence="1">Carbohydrate degradation; pentose phosphate pathway; D-ribose 5-phosphate from D-ribulose 5-phosphate (non-oxidative stage): step 1/1.</text>
</comment>
<comment type="subunit">
    <text evidence="1">Homodimer.</text>
</comment>
<comment type="similarity">
    <text evidence="1">Belongs to the ribose 5-phosphate isomerase family.</text>
</comment>
<sequence length="237" mass="25694">MGTERAKERAARFAASLVEDGMIVGLGSGSTAELAVRALGERLHDGLRLIGVATSQRTAALARRVGIELRDPDSVDRIDLAIDGADEVEERSLGLLKGRGGALVREKLVARMARRLVIIIDDSKLVAALGARFPLPVEVVPFGWRWCARWLEDLGGRPTLRCRPTGHPFRSDNGNLILDVAFGAIADPAWLDRTIKMLPGVIDHGLFLDMADLVIVGSETGIRLLERSRTVSETSKS</sequence>
<name>RPIA_THERP</name>
<organism>
    <name type="scientific">Thermomicrobium roseum (strain ATCC 27502 / DSM 5159 / P-2)</name>
    <dbReference type="NCBI Taxonomy" id="309801"/>
    <lineage>
        <taxon>Bacteria</taxon>
        <taxon>Pseudomonadati</taxon>
        <taxon>Thermomicrobiota</taxon>
        <taxon>Thermomicrobia</taxon>
        <taxon>Thermomicrobiales</taxon>
        <taxon>Thermomicrobiaceae</taxon>
        <taxon>Thermomicrobium</taxon>
    </lineage>
</organism>
<dbReference type="EC" id="5.3.1.6" evidence="1"/>
<dbReference type="EMBL" id="CP001275">
    <property type="protein sequence ID" value="ACM04945.1"/>
    <property type="molecule type" value="Genomic_DNA"/>
</dbReference>
<dbReference type="RefSeq" id="WP_012641883.1">
    <property type="nucleotide sequence ID" value="NC_011959.1"/>
</dbReference>
<dbReference type="SMR" id="B9KYD3"/>
<dbReference type="STRING" id="309801.trd_0478"/>
<dbReference type="KEGG" id="tro:trd_0478"/>
<dbReference type="eggNOG" id="COG0120">
    <property type="taxonomic scope" value="Bacteria"/>
</dbReference>
<dbReference type="HOGENOM" id="CLU_056590_1_0_0"/>
<dbReference type="OrthoDB" id="5870696at2"/>
<dbReference type="UniPathway" id="UPA00115">
    <property type="reaction ID" value="UER00412"/>
</dbReference>
<dbReference type="Proteomes" id="UP000000447">
    <property type="component" value="Chromosome"/>
</dbReference>
<dbReference type="GO" id="GO:0004751">
    <property type="term" value="F:ribose-5-phosphate isomerase activity"/>
    <property type="evidence" value="ECO:0007669"/>
    <property type="project" value="UniProtKB-UniRule"/>
</dbReference>
<dbReference type="GO" id="GO:0009052">
    <property type="term" value="P:pentose-phosphate shunt, non-oxidative branch"/>
    <property type="evidence" value="ECO:0007669"/>
    <property type="project" value="UniProtKB-UniRule"/>
</dbReference>
<dbReference type="CDD" id="cd01398">
    <property type="entry name" value="RPI_A"/>
    <property type="match status" value="1"/>
</dbReference>
<dbReference type="FunFam" id="3.40.50.1360:FF:000001">
    <property type="entry name" value="Ribose-5-phosphate isomerase A"/>
    <property type="match status" value="1"/>
</dbReference>
<dbReference type="Gene3D" id="3.30.70.260">
    <property type="match status" value="1"/>
</dbReference>
<dbReference type="Gene3D" id="3.40.50.1360">
    <property type="match status" value="1"/>
</dbReference>
<dbReference type="HAMAP" id="MF_00170">
    <property type="entry name" value="Rib_5P_isom_A"/>
    <property type="match status" value="1"/>
</dbReference>
<dbReference type="InterPro" id="IPR037171">
    <property type="entry name" value="NagB/RpiA_transferase-like"/>
</dbReference>
<dbReference type="InterPro" id="IPR050262">
    <property type="entry name" value="Ribose-5P_isomerase"/>
</dbReference>
<dbReference type="InterPro" id="IPR020672">
    <property type="entry name" value="Ribose5P_isomerase_typA_subgr"/>
</dbReference>
<dbReference type="InterPro" id="IPR004788">
    <property type="entry name" value="Ribose5P_isomerase_type_A"/>
</dbReference>
<dbReference type="NCBIfam" id="NF001924">
    <property type="entry name" value="PRK00702.1"/>
    <property type="match status" value="1"/>
</dbReference>
<dbReference type="NCBIfam" id="TIGR00021">
    <property type="entry name" value="rpiA"/>
    <property type="match status" value="1"/>
</dbReference>
<dbReference type="PANTHER" id="PTHR43748">
    <property type="entry name" value="RIBOSE-5-PHOSPHATE ISOMERASE 3, CHLOROPLASTIC-RELATED"/>
    <property type="match status" value="1"/>
</dbReference>
<dbReference type="PANTHER" id="PTHR43748:SF3">
    <property type="entry name" value="RIBOSE-5-PHOSPHATE ISOMERASE 3, CHLOROPLASTIC-RELATED"/>
    <property type="match status" value="1"/>
</dbReference>
<dbReference type="Pfam" id="PF06026">
    <property type="entry name" value="Rib_5-P_isom_A"/>
    <property type="match status" value="1"/>
</dbReference>
<dbReference type="SUPFAM" id="SSF75445">
    <property type="entry name" value="D-ribose-5-phosphate isomerase (RpiA), lid domain"/>
    <property type="match status" value="1"/>
</dbReference>
<dbReference type="SUPFAM" id="SSF100950">
    <property type="entry name" value="NagB/RpiA/CoA transferase-like"/>
    <property type="match status" value="1"/>
</dbReference>
<keyword id="KW-0413">Isomerase</keyword>
<keyword id="KW-1185">Reference proteome</keyword>
<gene>
    <name evidence="1" type="primary">rpiA</name>
    <name type="ordered locus">trd_0478</name>
</gene>
<evidence type="ECO:0000255" key="1">
    <source>
        <dbReference type="HAMAP-Rule" id="MF_00170"/>
    </source>
</evidence>
<protein>
    <recommendedName>
        <fullName evidence="1">Ribose-5-phosphate isomerase A</fullName>
        <ecNumber evidence="1">5.3.1.6</ecNumber>
    </recommendedName>
    <alternativeName>
        <fullName evidence="1">Phosphoriboisomerase A</fullName>
        <shortName evidence="1">PRI</shortName>
    </alternativeName>
</protein>
<proteinExistence type="inferred from homology"/>
<feature type="chain" id="PRO_1000194730" description="Ribose-5-phosphate isomerase A">
    <location>
        <begin position="1"/>
        <end position="237"/>
    </location>
</feature>
<feature type="active site" description="Proton acceptor" evidence="1">
    <location>
        <position position="106"/>
    </location>
</feature>
<feature type="binding site" evidence="1">
    <location>
        <begin position="28"/>
        <end position="31"/>
    </location>
    <ligand>
        <name>substrate</name>
    </ligand>
</feature>
<feature type="binding site" evidence="1">
    <location>
        <begin position="83"/>
        <end position="86"/>
    </location>
    <ligand>
        <name>substrate</name>
    </ligand>
</feature>
<feature type="binding site" evidence="1">
    <location>
        <begin position="97"/>
        <end position="100"/>
    </location>
    <ligand>
        <name>substrate</name>
    </ligand>
</feature>
<feature type="binding site" evidence="1">
    <location>
        <position position="124"/>
    </location>
    <ligand>
        <name>substrate</name>
    </ligand>
</feature>
<reference key="1">
    <citation type="journal article" date="2009" name="PLoS ONE">
        <title>Complete genome sequence of the aerobic CO-oxidizing thermophile Thermomicrobium roseum.</title>
        <authorList>
            <person name="Wu D."/>
            <person name="Raymond J."/>
            <person name="Wu M."/>
            <person name="Chatterji S."/>
            <person name="Ren Q."/>
            <person name="Graham J.E."/>
            <person name="Bryant D.A."/>
            <person name="Robb F."/>
            <person name="Colman A."/>
            <person name="Tallon L.J."/>
            <person name="Badger J.H."/>
            <person name="Madupu R."/>
            <person name="Ward N.L."/>
            <person name="Eisen J.A."/>
        </authorList>
    </citation>
    <scope>NUCLEOTIDE SEQUENCE [LARGE SCALE GENOMIC DNA]</scope>
    <source>
        <strain>ATCC 27502 / DSM 5159 / P-2</strain>
    </source>
</reference>
<accession>B9KYD3</accession>